<gene>
    <name type="ordered locus">CNG00570</name>
</gene>
<protein>
    <recommendedName>
        <fullName evidence="1">Glutamyl-tRNA(Gln) amidotransferase subunit B, mitochondrial</fullName>
        <shortName evidence="1">Glu-AdT subunit B</shortName>
        <ecNumber evidence="1">6.3.5.-</ecNumber>
    </recommendedName>
</protein>
<evidence type="ECO:0000255" key="1">
    <source>
        <dbReference type="HAMAP-Rule" id="MF_03147"/>
    </source>
</evidence>
<feature type="transit peptide" description="Mitochondrion" evidence="1">
    <location>
        <begin position="1"/>
        <end position="22"/>
    </location>
</feature>
<feature type="chain" id="PRO_0000413255" description="Glutamyl-tRNA(Gln) amidotransferase subunit B, mitochondrial">
    <location>
        <begin position="23"/>
        <end position="521"/>
    </location>
</feature>
<name>GATB_CRYNJ</name>
<dbReference type="EC" id="6.3.5.-" evidence="1"/>
<dbReference type="EMBL" id="AE017347">
    <property type="protein sequence ID" value="AAW44458.1"/>
    <property type="molecule type" value="Genomic_DNA"/>
</dbReference>
<dbReference type="RefSeq" id="XP_571765.1">
    <property type="nucleotide sequence ID" value="XM_571765.2"/>
</dbReference>
<dbReference type="SMR" id="Q5KEG8"/>
<dbReference type="FunCoup" id="Q5KEG8">
    <property type="interactions" value="284"/>
</dbReference>
<dbReference type="STRING" id="214684.Q5KEG8"/>
<dbReference type="PaxDb" id="214684-Q5KEG8"/>
<dbReference type="DNASU" id="3258862"/>
<dbReference type="EnsemblFungi" id="AAW44458">
    <property type="protein sequence ID" value="AAW44458"/>
    <property type="gene ID" value="CNG00570"/>
</dbReference>
<dbReference type="GeneID" id="3258862"/>
<dbReference type="KEGG" id="cne:CNG00570"/>
<dbReference type="VEuPathDB" id="FungiDB:CNG00570"/>
<dbReference type="eggNOG" id="KOG2438">
    <property type="taxonomic scope" value="Eukaryota"/>
</dbReference>
<dbReference type="HOGENOM" id="CLU_019240_4_0_1"/>
<dbReference type="InParanoid" id="Q5KEG8"/>
<dbReference type="OMA" id="ARKWWMG"/>
<dbReference type="OrthoDB" id="1722066at2759"/>
<dbReference type="Proteomes" id="UP000002149">
    <property type="component" value="Chromosome 7"/>
</dbReference>
<dbReference type="GO" id="GO:0030956">
    <property type="term" value="C:glutamyl-tRNA(Gln) amidotransferase complex"/>
    <property type="evidence" value="ECO:0000318"/>
    <property type="project" value="GO_Central"/>
</dbReference>
<dbReference type="GO" id="GO:0005739">
    <property type="term" value="C:mitochondrion"/>
    <property type="evidence" value="ECO:0000318"/>
    <property type="project" value="GO_Central"/>
</dbReference>
<dbReference type="GO" id="GO:0005524">
    <property type="term" value="F:ATP binding"/>
    <property type="evidence" value="ECO:0007669"/>
    <property type="project" value="UniProtKB-KW"/>
</dbReference>
<dbReference type="GO" id="GO:0050567">
    <property type="term" value="F:glutaminyl-tRNA synthase (glutamine-hydrolyzing) activity"/>
    <property type="evidence" value="ECO:0000318"/>
    <property type="project" value="GO_Central"/>
</dbReference>
<dbReference type="GO" id="GO:0070681">
    <property type="term" value="P:glutaminyl-tRNAGln biosynthesis via transamidation"/>
    <property type="evidence" value="ECO:0000318"/>
    <property type="project" value="GO_Central"/>
</dbReference>
<dbReference type="GO" id="GO:0032543">
    <property type="term" value="P:mitochondrial translation"/>
    <property type="evidence" value="ECO:0000318"/>
    <property type="project" value="GO_Central"/>
</dbReference>
<dbReference type="Gene3D" id="1.10.10.410">
    <property type="match status" value="1"/>
</dbReference>
<dbReference type="HAMAP" id="MF_00121">
    <property type="entry name" value="GatB"/>
    <property type="match status" value="1"/>
</dbReference>
<dbReference type="InterPro" id="IPR017959">
    <property type="entry name" value="Asn/Gln-tRNA_amidoTrfase_suB/E"/>
</dbReference>
<dbReference type="InterPro" id="IPR006075">
    <property type="entry name" value="Asn/Gln-tRNA_Trfase_suB/E_cat"/>
</dbReference>
<dbReference type="InterPro" id="IPR018027">
    <property type="entry name" value="Asn/Gln_amidotransferase"/>
</dbReference>
<dbReference type="InterPro" id="IPR003789">
    <property type="entry name" value="Asn/Gln_tRNA_amidoTrase-B-like"/>
</dbReference>
<dbReference type="InterPro" id="IPR004413">
    <property type="entry name" value="GatB"/>
</dbReference>
<dbReference type="InterPro" id="IPR023168">
    <property type="entry name" value="GatB_Yqey_C_2"/>
</dbReference>
<dbReference type="InterPro" id="IPR017958">
    <property type="entry name" value="Gln-tRNA_amidoTrfase_suB_CS"/>
</dbReference>
<dbReference type="InterPro" id="IPR014746">
    <property type="entry name" value="Gln_synth/guanido_kin_cat_dom"/>
</dbReference>
<dbReference type="NCBIfam" id="TIGR00133">
    <property type="entry name" value="gatB"/>
    <property type="match status" value="1"/>
</dbReference>
<dbReference type="NCBIfam" id="NF004012">
    <property type="entry name" value="PRK05477.1-2"/>
    <property type="match status" value="1"/>
</dbReference>
<dbReference type="NCBIfam" id="NF004014">
    <property type="entry name" value="PRK05477.1-4"/>
    <property type="match status" value="1"/>
</dbReference>
<dbReference type="PANTHER" id="PTHR11659">
    <property type="entry name" value="GLUTAMYL-TRNA GLN AMIDOTRANSFERASE SUBUNIT B MITOCHONDRIAL AND PROKARYOTIC PET112-RELATED"/>
    <property type="match status" value="1"/>
</dbReference>
<dbReference type="PANTHER" id="PTHR11659:SF0">
    <property type="entry name" value="GLUTAMYL-TRNA(GLN) AMIDOTRANSFERASE SUBUNIT B, MITOCHONDRIAL"/>
    <property type="match status" value="1"/>
</dbReference>
<dbReference type="Pfam" id="PF02934">
    <property type="entry name" value="GatB_N"/>
    <property type="match status" value="1"/>
</dbReference>
<dbReference type="Pfam" id="PF02637">
    <property type="entry name" value="GatB_Yqey"/>
    <property type="match status" value="1"/>
</dbReference>
<dbReference type="SMART" id="SM00845">
    <property type="entry name" value="GatB_Yqey"/>
    <property type="match status" value="1"/>
</dbReference>
<dbReference type="SUPFAM" id="SSF89095">
    <property type="entry name" value="GatB/YqeY motif"/>
    <property type="match status" value="2"/>
</dbReference>
<dbReference type="SUPFAM" id="SSF55931">
    <property type="entry name" value="Glutamine synthetase/guanido kinase"/>
    <property type="match status" value="1"/>
</dbReference>
<dbReference type="PROSITE" id="PS01234">
    <property type="entry name" value="GATB"/>
    <property type="match status" value="1"/>
</dbReference>
<proteinExistence type="inferred from homology"/>
<accession>Q5KEG8</accession>
<comment type="function">
    <text evidence="1">Allows the formation of correctly charged Gln-tRNA(Gln) through the transamidation of misacylated Glu-tRNA(Gln) in the mitochondria. The reaction takes place in the presence of glutamine and ATP through an activated gamma-phospho-Glu-tRNA(Gln).</text>
</comment>
<comment type="catalytic activity">
    <reaction evidence="1">
        <text>L-glutamyl-tRNA(Gln) + L-glutamine + ATP + H2O = L-glutaminyl-tRNA(Gln) + L-glutamate + ADP + phosphate + H(+)</text>
        <dbReference type="Rhea" id="RHEA:17521"/>
        <dbReference type="Rhea" id="RHEA-COMP:9681"/>
        <dbReference type="Rhea" id="RHEA-COMP:9684"/>
        <dbReference type="ChEBI" id="CHEBI:15377"/>
        <dbReference type="ChEBI" id="CHEBI:15378"/>
        <dbReference type="ChEBI" id="CHEBI:29985"/>
        <dbReference type="ChEBI" id="CHEBI:30616"/>
        <dbReference type="ChEBI" id="CHEBI:43474"/>
        <dbReference type="ChEBI" id="CHEBI:58359"/>
        <dbReference type="ChEBI" id="CHEBI:78520"/>
        <dbReference type="ChEBI" id="CHEBI:78521"/>
        <dbReference type="ChEBI" id="CHEBI:456216"/>
    </reaction>
</comment>
<comment type="subunit">
    <text evidence="1">Subunit of the heterotrimeric GatCAB amidotransferase (AdT) complex, composed of A, B and C subunits.</text>
</comment>
<comment type="subcellular location">
    <subcellularLocation>
        <location evidence="1">Mitochondrion</location>
    </subcellularLocation>
</comment>
<comment type="similarity">
    <text evidence="1">Belongs to the GatB/GatE family. GatB subfamily.</text>
</comment>
<reference key="1">
    <citation type="journal article" date="2005" name="Science">
        <title>The genome of the basidiomycetous yeast and human pathogen Cryptococcus neoformans.</title>
        <authorList>
            <person name="Loftus B.J."/>
            <person name="Fung E."/>
            <person name="Roncaglia P."/>
            <person name="Rowley D."/>
            <person name="Amedeo P."/>
            <person name="Bruno D."/>
            <person name="Vamathevan J."/>
            <person name="Miranda M."/>
            <person name="Anderson I.J."/>
            <person name="Fraser J.A."/>
            <person name="Allen J.E."/>
            <person name="Bosdet I.E."/>
            <person name="Brent M.R."/>
            <person name="Chiu R."/>
            <person name="Doering T.L."/>
            <person name="Donlin M.J."/>
            <person name="D'Souza C.A."/>
            <person name="Fox D.S."/>
            <person name="Grinberg V."/>
            <person name="Fu J."/>
            <person name="Fukushima M."/>
            <person name="Haas B.J."/>
            <person name="Huang J.C."/>
            <person name="Janbon G."/>
            <person name="Jones S.J.M."/>
            <person name="Koo H.L."/>
            <person name="Krzywinski M.I."/>
            <person name="Kwon-Chung K.J."/>
            <person name="Lengeler K.B."/>
            <person name="Maiti R."/>
            <person name="Marra M.A."/>
            <person name="Marra R.E."/>
            <person name="Mathewson C.A."/>
            <person name="Mitchell T.G."/>
            <person name="Pertea M."/>
            <person name="Riggs F.R."/>
            <person name="Salzberg S.L."/>
            <person name="Schein J.E."/>
            <person name="Shvartsbeyn A."/>
            <person name="Shin H."/>
            <person name="Shumway M."/>
            <person name="Specht C.A."/>
            <person name="Suh B.B."/>
            <person name="Tenney A."/>
            <person name="Utterback T.R."/>
            <person name="Wickes B.L."/>
            <person name="Wortman J.R."/>
            <person name="Wye N.H."/>
            <person name="Kronstad J.W."/>
            <person name="Lodge J.K."/>
            <person name="Heitman J."/>
            <person name="Davis R.W."/>
            <person name="Fraser C.M."/>
            <person name="Hyman R.W."/>
        </authorList>
    </citation>
    <scope>NUCLEOTIDE SEQUENCE [LARGE SCALE GENOMIC DNA]</scope>
    <source>
        <strain>JEC21 / ATCC MYA-565</strain>
    </source>
</reference>
<keyword id="KW-0067">ATP-binding</keyword>
<keyword id="KW-0436">Ligase</keyword>
<keyword id="KW-0496">Mitochondrion</keyword>
<keyword id="KW-0547">Nucleotide-binding</keyword>
<keyword id="KW-0648">Protein biosynthesis</keyword>
<keyword id="KW-1185">Reference proteome</keyword>
<keyword id="KW-0809">Transit peptide</keyword>
<sequence length="521" mass="57839">MIALLRWGIARPSAPLRWSRCFATSTEKGDEGWQTVIGLEIHAQIKTGKKLFSKASTSYGHVPNTNVDVHDAAFPGTLPVLDINAIRLSIMTALALNCQINPRSTFDRKHYFYHDIPASYQITQHYNPLAWNGHLEIREGDNGSKRTFNIGIKQLQVEQDTAKSQTVGDAVLVDLNRAGTGLMEIVTDPDMRSPEEAGAFVKKLQGLLRRVGSADGDMEKGNLRVDVNVSVHRPGMPFGTRCEIKNINSVRFLQAAIESERQRHIAHYCTSPLEPLAQETRGFNELTLQTYSLRSKEEATDYRYMPDHNLPAIIIDDGYLDSLWKNLPEMPWQSVERLVKTYGVTKRDAETLLGLDEYSAQGIAYFEEVVEQDKKIAKKATNWIAHELLGQLGKAIRPWTPTIVPAPLMHELVTAVESREITGTTGKAIVKHFVSLPESASLPPSFAELLAELGLTPSAASVEDLTETCKKAMNNQPKAVADFKKGNEKVVMRLVGEVMKLSGGKADAMKAKDILLDLLKD</sequence>
<organism>
    <name type="scientific">Cryptococcus neoformans var. neoformans serotype D (strain JEC21 / ATCC MYA-565)</name>
    <name type="common">Filobasidiella neoformans</name>
    <dbReference type="NCBI Taxonomy" id="214684"/>
    <lineage>
        <taxon>Eukaryota</taxon>
        <taxon>Fungi</taxon>
        <taxon>Dikarya</taxon>
        <taxon>Basidiomycota</taxon>
        <taxon>Agaricomycotina</taxon>
        <taxon>Tremellomycetes</taxon>
        <taxon>Tremellales</taxon>
        <taxon>Cryptococcaceae</taxon>
        <taxon>Cryptococcus</taxon>
        <taxon>Cryptococcus neoformans species complex</taxon>
    </lineage>
</organism>